<protein>
    <recommendedName>
        <fullName evidence="1">tRNA-2-methylthio-N(6)-dimethylallyladenosine synthase</fullName>
        <ecNumber evidence="1">2.8.4.3</ecNumber>
    </recommendedName>
    <alternativeName>
        <fullName evidence="1">(Dimethylallyl)adenosine tRNA methylthiotransferase MiaB</fullName>
    </alternativeName>
    <alternativeName>
        <fullName evidence="1">tRNA-i(6)A37 methylthiotransferase</fullName>
    </alternativeName>
</protein>
<dbReference type="EC" id="2.8.4.3" evidence="1"/>
<dbReference type="EMBL" id="CP000384">
    <property type="protein sequence ID" value="ABG08265.1"/>
    <property type="molecule type" value="Genomic_DNA"/>
</dbReference>
<dbReference type="SMR" id="Q1BA19"/>
<dbReference type="KEGG" id="mmc:Mmcs_2157"/>
<dbReference type="HOGENOM" id="CLU_018697_2_2_11"/>
<dbReference type="GO" id="GO:0005829">
    <property type="term" value="C:cytosol"/>
    <property type="evidence" value="ECO:0007669"/>
    <property type="project" value="TreeGrafter"/>
</dbReference>
<dbReference type="GO" id="GO:0051539">
    <property type="term" value="F:4 iron, 4 sulfur cluster binding"/>
    <property type="evidence" value="ECO:0007669"/>
    <property type="project" value="UniProtKB-UniRule"/>
</dbReference>
<dbReference type="GO" id="GO:0046872">
    <property type="term" value="F:metal ion binding"/>
    <property type="evidence" value="ECO:0007669"/>
    <property type="project" value="UniProtKB-KW"/>
</dbReference>
<dbReference type="GO" id="GO:0035597">
    <property type="term" value="F:N6-isopentenyladenosine methylthiotransferase activity"/>
    <property type="evidence" value="ECO:0007669"/>
    <property type="project" value="TreeGrafter"/>
</dbReference>
<dbReference type="CDD" id="cd01335">
    <property type="entry name" value="Radical_SAM"/>
    <property type="match status" value="1"/>
</dbReference>
<dbReference type="FunFam" id="3.40.50.12160:FF:000008">
    <property type="entry name" value="tRNA-2-methylthio-N(6)-dimethylallyladenosine synthase"/>
    <property type="match status" value="1"/>
</dbReference>
<dbReference type="FunFam" id="3.80.30.20:FF:000001">
    <property type="entry name" value="tRNA-2-methylthio-N(6)-dimethylallyladenosine synthase 2"/>
    <property type="match status" value="1"/>
</dbReference>
<dbReference type="Gene3D" id="3.40.50.12160">
    <property type="entry name" value="Methylthiotransferase, N-terminal domain"/>
    <property type="match status" value="1"/>
</dbReference>
<dbReference type="Gene3D" id="3.80.30.20">
    <property type="entry name" value="tm_1862 like domain"/>
    <property type="match status" value="1"/>
</dbReference>
<dbReference type="HAMAP" id="MF_01864">
    <property type="entry name" value="tRNA_metthiotr_MiaB"/>
    <property type="match status" value="1"/>
</dbReference>
<dbReference type="InterPro" id="IPR006638">
    <property type="entry name" value="Elp3/MiaA/NifB-like_rSAM"/>
</dbReference>
<dbReference type="InterPro" id="IPR005839">
    <property type="entry name" value="Methylthiotransferase"/>
</dbReference>
<dbReference type="InterPro" id="IPR020612">
    <property type="entry name" value="Methylthiotransferase_CS"/>
</dbReference>
<dbReference type="InterPro" id="IPR013848">
    <property type="entry name" value="Methylthiotransferase_N"/>
</dbReference>
<dbReference type="InterPro" id="IPR038135">
    <property type="entry name" value="Methylthiotransferase_N_sf"/>
</dbReference>
<dbReference type="InterPro" id="IPR006463">
    <property type="entry name" value="MiaB_methiolase"/>
</dbReference>
<dbReference type="InterPro" id="IPR007197">
    <property type="entry name" value="rSAM"/>
</dbReference>
<dbReference type="InterPro" id="IPR023404">
    <property type="entry name" value="rSAM_horseshoe"/>
</dbReference>
<dbReference type="InterPro" id="IPR002792">
    <property type="entry name" value="TRAM_dom"/>
</dbReference>
<dbReference type="NCBIfam" id="TIGR01574">
    <property type="entry name" value="miaB-methiolase"/>
    <property type="match status" value="1"/>
</dbReference>
<dbReference type="NCBIfam" id="TIGR00089">
    <property type="entry name" value="MiaB/RimO family radical SAM methylthiotransferase"/>
    <property type="match status" value="1"/>
</dbReference>
<dbReference type="PANTHER" id="PTHR43020">
    <property type="entry name" value="CDK5 REGULATORY SUBUNIT-ASSOCIATED PROTEIN 1"/>
    <property type="match status" value="1"/>
</dbReference>
<dbReference type="PANTHER" id="PTHR43020:SF2">
    <property type="entry name" value="MITOCHONDRIAL TRNA METHYLTHIOTRANSFERASE CDK5RAP1"/>
    <property type="match status" value="1"/>
</dbReference>
<dbReference type="Pfam" id="PF04055">
    <property type="entry name" value="Radical_SAM"/>
    <property type="match status" value="1"/>
</dbReference>
<dbReference type="Pfam" id="PF00919">
    <property type="entry name" value="UPF0004"/>
    <property type="match status" value="1"/>
</dbReference>
<dbReference type="SFLD" id="SFLDF00273">
    <property type="entry name" value="(dimethylallyl)adenosine_tRNA"/>
    <property type="match status" value="1"/>
</dbReference>
<dbReference type="SFLD" id="SFLDG01082">
    <property type="entry name" value="B12-binding_domain_containing"/>
    <property type="match status" value="1"/>
</dbReference>
<dbReference type="SFLD" id="SFLDS00029">
    <property type="entry name" value="Radical_SAM"/>
    <property type="match status" value="1"/>
</dbReference>
<dbReference type="SMART" id="SM00729">
    <property type="entry name" value="Elp3"/>
    <property type="match status" value="1"/>
</dbReference>
<dbReference type="SUPFAM" id="SSF102114">
    <property type="entry name" value="Radical SAM enzymes"/>
    <property type="match status" value="1"/>
</dbReference>
<dbReference type="PROSITE" id="PS51449">
    <property type="entry name" value="MTTASE_N"/>
    <property type="match status" value="1"/>
</dbReference>
<dbReference type="PROSITE" id="PS01278">
    <property type="entry name" value="MTTASE_RADICAL"/>
    <property type="match status" value="1"/>
</dbReference>
<dbReference type="PROSITE" id="PS51918">
    <property type="entry name" value="RADICAL_SAM"/>
    <property type="match status" value="1"/>
</dbReference>
<dbReference type="PROSITE" id="PS50926">
    <property type="entry name" value="TRAM"/>
    <property type="match status" value="1"/>
</dbReference>
<accession>Q1BA19</accession>
<keyword id="KW-0004">4Fe-4S</keyword>
<keyword id="KW-0963">Cytoplasm</keyword>
<keyword id="KW-0408">Iron</keyword>
<keyword id="KW-0411">Iron-sulfur</keyword>
<keyword id="KW-0479">Metal-binding</keyword>
<keyword id="KW-0949">S-adenosyl-L-methionine</keyword>
<keyword id="KW-0808">Transferase</keyword>
<keyword id="KW-0819">tRNA processing</keyword>
<reference key="1">
    <citation type="submission" date="2006-06" db="EMBL/GenBank/DDBJ databases">
        <title>Complete sequence of chromosome of Mycobacterium sp. MCS.</title>
        <authorList>
            <consortium name="US DOE Joint Genome Institute"/>
            <person name="Copeland A."/>
            <person name="Lucas S."/>
            <person name="Lapidus A."/>
            <person name="Barry K."/>
            <person name="Detter J.C."/>
            <person name="Glavina del Rio T."/>
            <person name="Hammon N."/>
            <person name="Israni S."/>
            <person name="Dalin E."/>
            <person name="Tice H."/>
            <person name="Pitluck S."/>
            <person name="Martinez M."/>
            <person name="Schmutz J."/>
            <person name="Larimer F."/>
            <person name="Land M."/>
            <person name="Hauser L."/>
            <person name="Kyrpides N."/>
            <person name="Kim E."/>
            <person name="Miller C.D."/>
            <person name="Hughes J.E."/>
            <person name="Anderson A.J."/>
            <person name="Sims R.C."/>
            <person name="Richardson P."/>
        </authorList>
    </citation>
    <scope>NUCLEOTIDE SEQUENCE [LARGE SCALE GENOMIC DNA]</scope>
    <source>
        <strain>MCS</strain>
    </source>
</reference>
<evidence type="ECO:0000255" key="1">
    <source>
        <dbReference type="HAMAP-Rule" id="MF_01864"/>
    </source>
</evidence>
<evidence type="ECO:0000255" key="2">
    <source>
        <dbReference type="PROSITE-ProRule" id="PRU01266"/>
    </source>
</evidence>
<feature type="chain" id="PRO_0000374393" description="tRNA-2-methylthio-N(6)-dimethylallyladenosine synthase">
    <location>
        <begin position="1"/>
        <end position="525"/>
    </location>
</feature>
<feature type="domain" description="MTTase N-terminal" evidence="1">
    <location>
        <begin position="14"/>
        <end position="130"/>
    </location>
</feature>
<feature type="domain" description="Radical SAM core" evidence="2">
    <location>
        <begin position="153"/>
        <end position="400"/>
    </location>
</feature>
<feature type="domain" description="TRAM" evidence="1">
    <location>
        <begin position="403"/>
        <end position="482"/>
    </location>
</feature>
<feature type="binding site" evidence="1">
    <location>
        <position position="23"/>
    </location>
    <ligand>
        <name>[4Fe-4S] cluster</name>
        <dbReference type="ChEBI" id="CHEBI:49883"/>
        <label>1</label>
    </ligand>
</feature>
<feature type="binding site" evidence="1">
    <location>
        <position position="59"/>
    </location>
    <ligand>
        <name>[4Fe-4S] cluster</name>
        <dbReference type="ChEBI" id="CHEBI:49883"/>
        <label>1</label>
    </ligand>
</feature>
<feature type="binding site" evidence="1">
    <location>
        <position position="93"/>
    </location>
    <ligand>
        <name>[4Fe-4S] cluster</name>
        <dbReference type="ChEBI" id="CHEBI:49883"/>
        <label>1</label>
    </ligand>
</feature>
<feature type="binding site" evidence="1">
    <location>
        <position position="167"/>
    </location>
    <ligand>
        <name>[4Fe-4S] cluster</name>
        <dbReference type="ChEBI" id="CHEBI:49883"/>
        <label>2</label>
        <note>4Fe-4S-S-AdoMet</note>
    </ligand>
</feature>
<feature type="binding site" evidence="1">
    <location>
        <position position="171"/>
    </location>
    <ligand>
        <name>[4Fe-4S] cluster</name>
        <dbReference type="ChEBI" id="CHEBI:49883"/>
        <label>2</label>
        <note>4Fe-4S-S-AdoMet</note>
    </ligand>
</feature>
<feature type="binding site" evidence="1">
    <location>
        <position position="174"/>
    </location>
    <ligand>
        <name>[4Fe-4S] cluster</name>
        <dbReference type="ChEBI" id="CHEBI:49883"/>
        <label>2</label>
        <note>4Fe-4S-S-AdoMet</note>
    </ligand>
</feature>
<comment type="function">
    <text evidence="1">Catalyzes the methylthiolation of N6-(dimethylallyl)adenosine (i(6)A), leading to the formation of 2-methylthio-N6-(dimethylallyl)adenosine (ms(2)i(6)A) at position 37 in tRNAs that read codons beginning with uridine.</text>
</comment>
<comment type="catalytic activity">
    <reaction evidence="1">
        <text>N(6)-dimethylallyladenosine(37) in tRNA + (sulfur carrier)-SH + AH2 + 2 S-adenosyl-L-methionine = 2-methylsulfanyl-N(6)-dimethylallyladenosine(37) in tRNA + (sulfur carrier)-H + 5'-deoxyadenosine + L-methionine + A + S-adenosyl-L-homocysteine + 2 H(+)</text>
        <dbReference type="Rhea" id="RHEA:37067"/>
        <dbReference type="Rhea" id="RHEA-COMP:10375"/>
        <dbReference type="Rhea" id="RHEA-COMP:10376"/>
        <dbReference type="Rhea" id="RHEA-COMP:14737"/>
        <dbReference type="Rhea" id="RHEA-COMP:14739"/>
        <dbReference type="ChEBI" id="CHEBI:13193"/>
        <dbReference type="ChEBI" id="CHEBI:15378"/>
        <dbReference type="ChEBI" id="CHEBI:17319"/>
        <dbReference type="ChEBI" id="CHEBI:17499"/>
        <dbReference type="ChEBI" id="CHEBI:29917"/>
        <dbReference type="ChEBI" id="CHEBI:57844"/>
        <dbReference type="ChEBI" id="CHEBI:57856"/>
        <dbReference type="ChEBI" id="CHEBI:59789"/>
        <dbReference type="ChEBI" id="CHEBI:64428"/>
        <dbReference type="ChEBI" id="CHEBI:74415"/>
        <dbReference type="ChEBI" id="CHEBI:74417"/>
        <dbReference type="EC" id="2.8.4.3"/>
    </reaction>
</comment>
<comment type="cofactor">
    <cofactor evidence="1">
        <name>[4Fe-4S] cluster</name>
        <dbReference type="ChEBI" id="CHEBI:49883"/>
    </cofactor>
    <text evidence="1">Binds 2 [4Fe-4S] clusters. One cluster is coordinated with 3 cysteines and an exchangeable S-adenosyl-L-methionine.</text>
</comment>
<comment type="subunit">
    <text evidence="1">Monomer.</text>
</comment>
<comment type="subcellular location">
    <subcellularLocation>
        <location evidence="1">Cytoplasm</location>
    </subcellularLocation>
</comment>
<comment type="similarity">
    <text evidence="1">Belongs to the methylthiotransferase family. MiaB subfamily.</text>
</comment>
<name>MIAB_MYCSS</name>
<sequence length="525" mass="56726">MTQQAANALPPVARTYQVRTYGCQMNVHDSERLAGLLEDAGYRRAADGADADVVVFNTCAVRENADNKLYGNLSHLAPRKRSEPQMQIAVGGCLAQKDRDAVLRRAPWVDVVFGTHNIGSLPTLLERARHNRAAQVEIAEALQEFPSTLPAARESAYAGWVSISVGCNNTCTFCIVPSLRGKEVDRRPGDVLAEIQTLVDQGVLEVTLLGQNVNAYGVSFAADERLREDPRMWQSVPRNRGAFAELLRACGRIDGLERVRFTSPHPAEFTDDVIEAMAETPNVCPALHMPLQSGSDRILRAMRRSYRAEKYLGIIDRVRAAIPDAAITTDLIVGFPGETEEDFQATLDVVAASRFSSAFTFQYSKRPGTPAADMPGQLPKAVVSERYQRLIELQERISLEENQAQVGRTLELLVATGEGRKDAATARLSGRARDGRLVHFAPGAAADEPLARRAFDQVRPGDVVTTTVTGAAPHHLIADGALLTHRRTRAGDAHAAGLRPRTGVGLGIPGVGAPAPAPVTTGCAL</sequence>
<organism>
    <name type="scientific">Mycobacterium sp. (strain MCS)</name>
    <dbReference type="NCBI Taxonomy" id="164756"/>
    <lineage>
        <taxon>Bacteria</taxon>
        <taxon>Bacillati</taxon>
        <taxon>Actinomycetota</taxon>
        <taxon>Actinomycetes</taxon>
        <taxon>Mycobacteriales</taxon>
        <taxon>Mycobacteriaceae</taxon>
        <taxon>Mycobacterium</taxon>
    </lineage>
</organism>
<gene>
    <name evidence="1" type="primary">miaB</name>
    <name type="ordered locus">Mmcs_2157</name>
</gene>
<proteinExistence type="inferred from homology"/>